<gene>
    <name type="primary">ugpB</name>
    <name type="ordered locus">BMEII0625</name>
</gene>
<reference key="1">
    <citation type="journal article" date="2002" name="Proc. Natl. Acad. Sci. U.S.A.">
        <title>The genome sequence of the facultative intracellular pathogen Brucella melitensis.</title>
        <authorList>
            <person name="DelVecchio V.G."/>
            <person name="Kapatral V."/>
            <person name="Redkar R.J."/>
            <person name="Patra G."/>
            <person name="Mujer C."/>
            <person name="Los T."/>
            <person name="Ivanova N."/>
            <person name="Anderson I."/>
            <person name="Bhattacharyya A."/>
            <person name="Lykidis A."/>
            <person name="Reznik G."/>
            <person name="Jablonski L."/>
            <person name="Larsen N."/>
            <person name="D'Souza M."/>
            <person name="Bernal A."/>
            <person name="Mazur M."/>
            <person name="Goltsman E."/>
            <person name="Selkov E."/>
            <person name="Elzer P.H."/>
            <person name="Hagius S."/>
            <person name="O'Callaghan D."/>
            <person name="Letesson J.-J."/>
            <person name="Haselkorn R."/>
            <person name="Kyrpides N.C."/>
            <person name="Overbeek R."/>
        </authorList>
    </citation>
    <scope>NUCLEOTIDE SEQUENCE [LARGE SCALE GENOMIC DNA]</scope>
    <source>
        <strain>ATCC 23456 / CCUG 17765 / NCTC 10094 / 16M</strain>
    </source>
</reference>
<feature type="signal peptide" evidence="2">
    <location>
        <begin position="1"/>
        <end position="25"/>
    </location>
</feature>
<feature type="chain" id="PRO_0000290127" description="sn-glycerol-3-phosphate-binding periplasmic protein UgpB">
    <location>
        <begin position="26"/>
        <end position="433"/>
    </location>
</feature>
<feature type="binding site" evidence="1">
    <location>
        <position position="67"/>
    </location>
    <ligand>
        <name>sn-glycerol 3-phosphate</name>
        <dbReference type="ChEBI" id="CHEBI:57597"/>
    </ligand>
</feature>
<feature type="binding site" evidence="1">
    <location>
        <position position="91"/>
    </location>
    <ligand>
        <name>sn-glycerol 3-phosphate</name>
        <dbReference type="ChEBI" id="CHEBI:57597"/>
    </ligand>
</feature>
<feature type="binding site" evidence="1">
    <location>
        <position position="146"/>
    </location>
    <ligand>
        <name>sn-glycerol 3-phosphate</name>
        <dbReference type="ChEBI" id="CHEBI:57597"/>
    </ligand>
</feature>
<feature type="binding site" evidence="1">
    <location>
        <position position="273"/>
    </location>
    <ligand>
        <name>sn-glycerol 3-phosphate</name>
        <dbReference type="ChEBI" id="CHEBI:57597"/>
    </ligand>
</feature>
<feature type="binding site" evidence="1">
    <location>
        <position position="307"/>
    </location>
    <ligand>
        <name>sn-glycerol 3-phosphate</name>
        <dbReference type="ChEBI" id="CHEBI:57597"/>
    </ligand>
</feature>
<feature type="binding site" evidence="1">
    <location>
        <position position="346"/>
    </location>
    <ligand>
        <name>sn-glycerol 3-phosphate</name>
        <dbReference type="ChEBI" id="CHEBI:57597"/>
    </ligand>
</feature>
<feature type="binding site" evidence="1">
    <location>
        <position position="397"/>
    </location>
    <ligand>
        <name>sn-glycerol 3-phosphate</name>
        <dbReference type="ChEBI" id="CHEBI:57597"/>
    </ligand>
</feature>
<accession>Q8YCA7</accession>
<dbReference type="EMBL" id="AE008918">
    <property type="protein sequence ID" value="AAL53867.1"/>
    <property type="status" value="ALT_INIT"/>
    <property type="molecule type" value="Genomic_DNA"/>
</dbReference>
<dbReference type="PIR" id="AH3587">
    <property type="entry name" value="AH3587"/>
</dbReference>
<dbReference type="RefSeq" id="WP_004681934.1">
    <property type="nucleotide sequence ID" value="NC_003318.1"/>
</dbReference>
<dbReference type="SMR" id="Q8YCA7"/>
<dbReference type="GeneID" id="29596058"/>
<dbReference type="KEGG" id="bme:BMEII0625"/>
<dbReference type="KEGG" id="bmel:DK63_2622"/>
<dbReference type="PATRIC" id="fig|224914.52.peg.2747"/>
<dbReference type="eggNOG" id="COG1653">
    <property type="taxonomic scope" value="Bacteria"/>
</dbReference>
<dbReference type="PhylomeDB" id="Q8YCA7"/>
<dbReference type="Proteomes" id="UP000000419">
    <property type="component" value="Chromosome II"/>
</dbReference>
<dbReference type="GO" id="GO:0042597">
    <property type="term" value="C:periplasmic space"/>
    <property type="evidence" value="ECO:0007669"/>
    <property type="project" value="UniProtKB-SubCell"/>
</dbReference>
<dbReference type="CDD" id="cd14748">
    <property type="entry name" value="PBP2_UgpB"/>
    <property type="match status" value="1"/>
</dbReference>
<dbReference type="Gene3D" id="3.40.190.10">
    <property type="entry name" value="Periplasmic binding protein-like II"/>
    <property type="match status" value="2"/>
</dbReference>
<dbReference type="InterPro" id="IPR050490">
    <property type="entry name" value="Bact_solute-bd_prot1"/>
</dbReference>
<dbReference type="InterPro" id="IPR006059">
    <property type="entry name" value="SBP"/>
</dbReference>
<dbReference type="NCBIfam" id="NF008211">
    <property type="entry name" value="PRK10974.1"/>
    <property type="match status" value="1"/>
</dbReference>
<dbReference type="PANTHER" id="PTHR43649">
    <property type="entry name" value="ARABINOSE-BINDING PROTEIN-RELATED"/>
    <property type="match status" value="1"/>
</dbReference>
<dbReference type="PANTHER" id="PTHR43649:SF31">
    <property type="entry name" value="SN-GLYCEROL-3-PHOSPHATE-BINDING PERIPLASMIC PROTEIN UGPB"/>
    <property type="match status" value="1"/>
</dbReference>
<dbReference type="Pfam" id="PF13416">
    <property type="entry name" value="SBP_bac_8"/>
    <property type="match status" value="1"/>
</dbReference>
<dbReference type="SUPFAM" id="SSF53850">
    <property type="entry name" value="Periplasmic binding protein-like II"/>
    <property type="match status" value="1"/>
</dbReference>
<protein>
    <recommendedName>
        <fullName evidence="1">sn-glycerol-3-phosphate-binding periplasmic protein UgpB</fullName>
    </recommendedName>
</protein>
<sequence>MFTRLITTSALTGAIALTIGSQAFAQTELAWWHGMTGANNEMVNELSKEFNESQSEYKIVPVYKGNYPETLNAGIAAFRSKQPPAILQVFDAGSGVMMAAEGAIVPAAEVLEKGGYKFDKSQYLPGIVAYYSKPDGTMLSFPYNSSSPILYYNKDAFKKAGLDENKPPKTWPEVFEAAKKIKASGASPCGFTSTWLTWIQTENFAAWNNVPYGTNENGLAGTDVKLEINSPLYVEHFQAIADLAKDGTFRYGGRTSEAKQLFTSGECAMLTESSGGLGDVVKSGINYGIGQLPYYEGHGPQNTIPGGASLWVFAGLSDDQYKGIAEFFNFLSQSKIQVKLHEKSGYLPVTLAAYEETKKSDFYEKNPGRETPILQMMGKEPTENSKGVRLVNLPQVRDILNEEFEAMLGGKQDAKTALDNAVKRGNAAIAAAQ</sequence>
<name>UGPB_BRUME</name>
<keyword id="KW-0574">Periplasm</keyword>
<keyword id="KW-0732">Signal</keyword>
<keyword id="KW-0813">Transport</keyword>
<comment type="function">
    <text evidence="1">Part of the ABC transporter complex UgpBAEC involved in sn-glycerol-3-phosphate (G3P) import. Binds G3P.</text>
</comment>
<comment type="subunit">
    <text evidence="1">The complex is composed of two ATP-binding proteins (UgpC), two transmembrane proteins (UgpA and UgpE) and a solute-binding protein (UgpB).</text>
</comment>
<comment type="subcellular location">
    <subcellularLocation>
        <location evidence="1">Periplasm</location>
    </subcellularLocation>
</comment>
<comment type="similarity">
    <text evidence="3">Belongs to the bacterial solute-binding protein 1 family.</text>
</comment>
<comment type="sequence caution" evidence="3">
    <conflict type="erroneous initiation">
        <sequence resource="EMBL-CDS" id="AAL53867"/>
    </conflict>
</comment>
<organism>
    <name type="scientific">Brucella melitensis biotype 1 (strain ATCC 23456 / CCUG 17765 / NCTC 10094 / 16M)</name>
    <dbReference type="NCBI Taxonomy" id="224914"/>
    <lineage>
        <taxon>Bacteria</taxon>
        <taxon>Pseudomonadati</taxon>
        <taxon>Pseudomonadota</taxon>
        <taxon>Alphaproteobacteria</taxon>
        <taxon>Hyphomicrobiales</taxon>
        <taxon>Brucellaceae</taxon>
        <taxon>Brucella/Ochrobactrum group</taxon>
        <taxon>Brucella</taxon>
    </lineage>
</organism>
<proteinExistence type="inferred from homology"/>
<evidence type="ECO:0000250" key="1">
    <source>
        <dbReference type="UniProtKB" id="P0AG80"/>
    </source>
</evidence>
<evidence type="ECO:0000255" key="2"/>
<evidence type="ECO:0000305" key="3"/>